<gene>
    <name type="primary">ALB1</name>
    <name type="ordered locus">KLLA0E15158g</name>
</gene>
<protein>
    <recommendedName>
        <fullName>Ribosome biogenesis protein ALB1</fullName>
    </recommendedName>
</protein>
<evidence type="ECO:0000250" key="1"/>
<evidence type="ECO:0000256" key="2">
    <source>
        <dbReference type="SAM" id="MobiDB-lite"/>
    </source>
</evidence>
<evidence type="ECO:0000305" key="3"/>
<keyword id="KW-0963">Cytoplasm</keyword>
<keyword id="KW-0539">Nucleus</keyword>
<keyword id="KW-1185">Reference proteome</keyword>
<keyword id="KW-0690">Ribosome biogenesis</keyword>
<keyword id="KW-0813">Transport</keyword>
<proteinExistence type="inferred from homology"/>
<organism>
    <name type="scientific">Kluyveromyces lactis (strain ATCC 8585 / CBS 2359 / DSM 70799 / NBRC 1267 / NRRL Y-1140 / WM37)</name>
    <name type="common">Yeast</name>
    <name type="synonym">Candida sphaerica</name>
    <dbReference type="NCBI Taxonomy" id="284590"/>
    <lineage>
        <taxon>Eukaryota</taxon>
        <taxon>Fungi</taxon>
        <taxon>Dikarya</taxon>
        <taxon>Ascomycota</taxon>
        <taxon>Saccharomycotina</taxon>
        <taxon>Saccharomycetes</taxon>
        <taxon>Saccharomycetales</taxon>
        <taxon>Saccharomycetaceae</taxon>
        <taxon>Kluyveromyces</taxon>
    </lineage>
</organism>
<feature type="chain" id="PRO_0000333329" description="Ribosome biogenesis protein ALB1">
    <location>
        <begin position="1"/>
        <end position="160"/>
    </location>
</feature>
<feature type="region of interest" description="Disordered" evidence="2">
    <location>
        <begin position="1"/>
        <end position="51"/>
    </location>
</feature>
<feature type="compositionally biased region" description="Basic residues" evidence="2">
    <location>
        <begin position="10"/>
        <end position="24"/>
    </location>
</feature>
<feature type="compositionally biased region" description="Basic and acidic residues" evidence="2">
    <location>
        <begin position="25"/>
        <end position="34"/>
    </location>
</feature>
<feature type="compositionally biased region" description="Polar residues" evidence="2">
    <location>
        <begin position="41"/>
        <end position="50"/>
    </location>
</feature>
<accession>Q6CN59</accession>
<reference key="1">
    <citation type="journal article" date="2004" name="Nature">
        <title>Genome evolution in yeasts.</title>
        <authorList>
            <person name="Dujon B."/>
            <person name="Sherman D."/>
            <person name="Fischer G."/>
            <person name="Durrens P."/>
            <person name="Casaregola S."/>
            <person name="Lafontaine I."/>
            <person name="de Montigny J."/>
            <person name="Marck C."/>
            <person name="Neuveglise C."/>
            <person name="Talla E."/>
            <person name="Goffard N."/>
            <person name="Frangeul L."/>
            <person name="Aigle M."/>
            <person name="Anthouard V."/>
            <person name="Babour A."/>
            <person name="Barbe V."/>
            <person name="Barnay S."/>
            <person name="Blanchin S."/>
            <person name="Beckerich J.-M."/>
            <person name="Beyne E."/>
            <person name="Bleykasten C."/>
            <person name="Boisrame A."/>
            <person name="Boyer J."/>
            <person name="Cattolico L."/>
            <person name="Confanioleri F."/>
            <person name="de Daruvar A."/>
            <person name="Despons L."/>
            <person name="Fabre E."/>
            <person name="Fairhead C."/>
            <person name="Ferry-Dumazet H."/>
            <person name="Groppi A."/>
            <person name="Hantraye F."/>
            <person name="Hennequin C."/>
            <person name="Jauniaux N."/>
            <person name="Joyet P."/>
            <person name="Kachouri R."/>
            <person name="Kerrest A."/>
            <person name="Koszul R."/>
            <person name="Lemaire M."/>
            <person name="Lesur I."/>
            <person name="Ma L."/>
            <person name="Muller H."/>
            <person name="Nicaud J.-M."/>
            <person name="Nikolski M."/>
            <person name="Oztas S."/>
            <person name="Ozier-Kalogeropoulos O."/>
            <person name="Pellenz S."/>
            <person name="Potier S."/>
            <person name="Richard G.-F."/>
            <person name="Straub M.-L."/>
            <person name="Suleau A."/>
            <person name="Swennen D."/>
            <person name="Tekaia F."/>
            <person name="Wesolowski-Louvel M."/>
            <person name="Westhof E."/>
            <person name="Wirth B."/>
            <person name="Zeniou-Meyer M."/>
            <person name="Zivanovic Y."/>
            <person name="Bolotin-Fukuhara M."/>
            <person name="Thierry A."/>
            <person name="Bouchier C."/>
            <person name="Caudron B."/>
            <person name="Scarpelli C."/>
            <person name="Gaillardin C."/>
            <person name="Weissenbach J."/>
            <person name="Wincker P."/>
            <person name="Souciet J.-L."/>
        </authorList>
    </citation>
    <scope>NUCLEOTIDE SEQUENCE [LARGE SCALE GENOMIC DNA]</scope>
    <source>
        <strain>ATCC 8585 / CBS 2359 / DSM 70799 / NBRC 1267 / NRRL Y-1140 / WM37</strain>
    </source>
</reference>
<comment type="function">
    <text evidence="1">Involved in proper assembly of pre-ribosomal particles during the biogenesis of the 60S ribosomal subunit. Accompanies the pre-60S particles to the cytoplasm (By similarity).</text>
</comment>
<comment type="subunit">
    <text evidence="1">Component of the nucleoplasmic and cytoplasmic pre-60S ribosomal particles.</text>
</comment>
<comment type="subcellular location">
    <subcellularLocation>
        <location evidence="1">Cytoplasm</location>
    </subcellularLocation>
    <subcellularLocation>
        <location evidence="1">Nucleus</location>
    </subcellularLocation>
</comment>
<comment type="similarity">
    <text evidence="3">Belongs to the ALB1 family.</text>
</comment>
<sequence length="160" mass="17706">MPSKNSINRPKQKVNLNRKVHQRAAKRDAMEKKGLLAPARSSGTSKSGQLKSIPLDLYKGEHSTSGALTTKTLSKKRAKKIERNLKYVEQRKLLVDLQSQSEENGGMQIDAPVVKKEKETKKGQLEKMREAISTVLEDIQSQGLSLQTGSGTTLGGQYFL</sequence>
<dbReference type="EMBL" id="CR382125">
    <property type="protein sequence ID" value="CAG99717.1"/>
    <property type="molecule type" value="Genomic_DNA"/>
</dbReference>
<dbReference type="RefSeq" id="XP_454630.1">
    <property type="nucleotide sequence ID" value="XM_454630.1"/>
</dbReference>
<dbReference type="SMR" id="Q6CN59"/>
<dbReference type="FunCoup" id="Q6CN59">
    <property type="interactions" value="260"/>
</dbReference>
<dbReference type="STRING" id="284590.Q6CN59"/>
<dbReference type="PaxDb" id="284590-Q6CN59"/>
<dbReference type="KEGG" id="kla:KLLA0_E15093g"/>
<dbReference type="eggNOG" id="ENOG502S14D">
    <property type="taxonomic scope" value="Eukaryota"/>
</dbReference>
<dbReference type="HOGENOM" id="CLU_103824_0_0_1"/>
<dbReference type="InParanoid" id="Q6CN59"/>
<dbReference type="OMA" id="HHKVHSL"/>
<dbReference type="Proteomes" id="UP000000598">
    <property type="component" value="Chromosome E"/>
</dbReference>
<dbReference type="GO" id="GO:0005737">
    <property type="term" value="C:cytoplasm"/>
    <property type="evidence" value="ECO:0007669"/>
    <property type="project" value="UniProtKB-SubCell"/>
</dbReference>
<dbReference type="GO" id="GO:0005634">
    <property type="term" value="C:nucleus"/>
    <property type="evidence" value="ECO:0007669"/>
    <property type="project" value="UniProtKB-SubCell"/>
</dbReference>
<dbReference type="GO" id="GO:0042254">
    <property type="term" value="P:ribosome biogenesis"/>
    <property type="evidence" value="ECO:0007669"/>
    <property type="project" value="UniProtKB-KW"/>
</dbReference>
<dbReference type="InterPro" id="IPR022784">
    <property type="entry name" value="Ribosome_bgen_Alb1"/>
</dbReference>
<dbReference type="Pfam" id="PF09135">
    <property type="entry name" value="Alb1"/>
    <property type="match status" value="1"/>
</dbReference>
<name>ALB1_KLULA</name>